<gene>
    <name evidence="1" type="primary">argB</name>
    <name type="ordered locus">BTH_I0160</name>
</gene>
<comment type="function">
    <text evidence="1">Catalyzes the ATP-dependent phosphorylation of N-acetyl-L-glutamate.</text>
</comment>
<comment type="catalytic activity">
    <reaction evidence="1">
        <text>N-acetyl-L-glutamate + ATP = N-acetyl-L-glutamyl 5-phosphate + ADP</text>
        <dbReference type="Rhea" id="RHEA:14629"/>
        <dbReference type="ChEBI" id="CHEBI:30616"/>
        <dbReference type="ChEBI" id="CHEBI:44337"/>
        <dbReference type="ChEBI" id="CHEBI:57936"/>
        <dbReference type="ChEBI" id="CHEBI:456216"/>
        <dbReference type="EC" id="2.7.2.8"/>
    </reaction>
</comment>
<comment type="pathway">
    <text evidence="1">Amino-acid biosynthesis; L-arginine biosynthesis; N(2)-acetyl-L-ornithine from L-glutamate: step 2/4.</text>
</comment>
<comment type="subcellular location">
    <subcellularLocation>
        <location evidence="1">Cytoplasm</location>
    </subcellularLocation>
</comment>
<comment type="similarity">
    <text evidence="1">Belongs to the acetylglutamate kinase family. ArgB subfamily.</text>
</comment>
<comment type="sequence caution" evidence="2">
    <conflict type="erroneous initiation">
        <sequence resource="EMBL-CDS" id="ABC38474"/>
    </conflict>
</comment>
<proteinExistence type="inferred from homology"/>
<organism>
    <name type="scientific">Burkholderia thailandensis (strain ATCC 700388 / DSM 13276 / CCUG 48851 / CIP 106301 / E264)</name>
    <dbReference type="NCBI Taxonomy" id="271848"/>
    <lineage>
        <taxon>Bacteria</taxon>
        <taxon>Pseudomonadati</taxon>
        <taxon>Pseudomonadota</taxon>
        <taxon>Betaproteobacteria</taxon>
        <taxon>Burkholderiales</taxon>
        <taxon>Burkholderiaceae</taxon>
        <taxon>Burkholderia</taxon>
        <taxon>pseudomallei group</taxon>
    </lineage>
</organism>
<dbReference type="EC" id="2.7.2.8" evidence="1"/>
<dbReference type="EMBL" id="CP000086">
    <property type="protein sequence ID" value="ABC38474.1"/>
    <property type="status" value="ALT_INIT"/>
    <property type="molecule type" value="Genomic_DNA"/>
</dbReference>
<dbReference type="RefSeq" id="WP_009893574.1">
    <property type="nucleotide sequence ID" value="NZ_CP008785.1"/>
</dbReference>
<dbReference type="SMR" id="Q2T281"/>
<dbReference type="GeneID" id="45119932"/>
<dbReference type="KEGG" id="bte:BTH_I0160"/>
<dbReference type="HOGENOM" id="CLU_053680_0_1_4"/>
<dbReference type="UniPathway" id="UPA00068">
    <property type="reaction ID" value="UER00107"/>
</dbReference>
<dbReference type="Proteomes" id="UP000001930">
    <property type="component" value="Chromosome I"/>
</dbReference>
<dbReference type="GO" id="GO:0005737">
    <property type="term" value="C:cytoplasm"/>
    <property type="evidence" value="ECO:0007669"/>
    <property type="project" value="UniProtKB-SubCell"/>
</dbReference>
<dbReference type="GO" id="GO:0003991">
    <property type="term" value="F:acetylglutamate kinase activity"/>
    <property type="evidence" value="ECO:0007669"/>
    <property type="project" value="UniProtKB-UniRule"/>
</dbReference>
<dbReference type="GO" id="GO:0005524">
    <property type="term" value="F:ATP binding"/>
    <property type="evidence" value="ECO:0007669"/>
    <property type="project" value="UniProtKB-UniRule"/>
</dbReference>
<dbReference type="GO" id="GO:0042450">
    <property type="term" value="P:arginine biosynthetic process via ornithine"/>
    <property type="evidence" value="ECO:0007669"/>
    <property type="project" value="UniProtKB-UniRule"/>
</dbReference>
<dbReference type="GO" id="GO:0006526">
    <property type="term" value="P:L-arginine biosynthetic process"/>
    <property type="evidence" value="ECO:0007669"/>
    <property type="project" value="UniProtKB-UniPathway"/>
</dbReference>
<dbReference type="CDD" id="cd04250">
    <property type="entry name" value="AAK_NAGK-C"/>
    <property type="match status" value="1"/>
</dbReference>
<dbReference type="FunFam" id="3.40.1160.10:FF:000004">
    <property type="entry name" value="Acetylglutamate kinase"/>
    <property type="match status" value="1"/>
</dbReference>
<dbReference type="Gene3D" id="3.40.1160.10">
    <property type="entry name" value="Acetylglutamate kinase-like"/>
    <property type="match status" value="1"/>
</dbReference>
<dbReference type="HAMAP" id="MF_00082">
    <property type="entry name" value="ArgB"/>
    <property type="match status" value="1"/>
</dbReference>
<dbReference type="InterPro" id="IPR036393">
    <property type="entry name" value="AceGlu_kinase-like_sf"/>
</dbReference>
<dbReference type="InterPro" id="IPR004662">
    <property type="entry name" value="AcgluKinase_fam"/>
</dbReference>
<dbReference type="InterPro" id="IPR037528">
    <property type="entry name" value="ArgB"/>
</dbReference>
<dbReference type="InterPro" id="IPR001048">
    <property type="entry name" value="Asp/Glu/Uridylate_kinase"/>
</dbReference>
<dbReference type="InterPro" id="IPR041727">
    <property type="entry name" value="NAGK-C"/>
</dbReference>
<dbReference type="NCBIfam" id="TIGR00761">
    <property type="entry name" value="argB"/>
    <property type="match status" value="1"/>
</dbReference>
<dbReference type="PANTHER" id="PTHR23342">
    <property type="entry name" value="N-ACETYLGLUTAMATE SYNTHASE"/>
    <property type="match status" value="1"/>
</dbReference>
<dbReference type="PANTHER" id="PTHR23342:SF0">
    <property type="entry name" value="N-ACETYLGLUTAMATE SYNTHASE, MITOCHONDRIAL"/>
    <property type="match status" value="1"/>
</dbReference>
<dbReference type="Pfam" id="PF00696">
    <property type="entry name" value="AA_kinase"/>
    <property type="match status" value="1"/>
</dbReference>
<dbReference type="PIRSF" id="PIRSF000728">
    <property type="entry name" value="NAGK"/>
    <property type="match status" value="1"/>
</dbReference>
<dbReference type="SUPFAM" id="SSF53633">
    <property type="entry name" value="Carbamate kinase-like"/>
    <property type="match status" value="1"/>
</dbReference>
<protein>
    <recommendedName>
        <fullName evidence="1">Acetylglutamate kinase</fullName>
        <ecNumber evidence="1">2.7.2.8</ecNumber>
    </recommendedName>
    <alternativeName>
        <fullName evidence="1">N-acetyl-L-glutamate 5-phosphotransferase</fullName>
    </alternativeName>
    <alternativeName>
        <fullName evidence="1">NAG kinase</fullName>
        <shortName evidence="1">NAGK</shortName>
    </alternativeName>
</protein>
<evidence type="ECO:0000255" key="1">
    <source>
        <dbReference type="HAMAP-Rule" id="MF_00082"/>
    </source>
</evidence>
<evidence type="ECO:0000305" key="2"/>
<accession>Q2T281</accession>
<name>ARGB_BURTA</name>
<sequence length="299" mass="32163">MSEPIDLSQISPSLKAEILAEALPYIRRYHGKTVVIKYGGNAMTEERLKQGFARDVILLKLVGINPVIVHGGGPQIDQALKKIGKQGTFIQGMRVTDEETMEVVEWVLGGEVQQDIVTLINHFGGHAVGLTGKDGGLIHARKLMMPDRDNPGEYVDIGQVGEVEAINPAVVRALQDDAFIPVISPIGFGEDGLSYNINADLVAGKLATVLNAEKLVMMTNIPGVMDKEGNLLTDLSAREIDALFEDGTISGGMLPKISSALDAAKSGVKSVHIVDGRIEHSVLLEILTEQPFGTMIRSH</sequence>
<feature type="chain" id="PRO_0000264689" description="Acetylglutamate kinase">
    <location>
        <begin position="1"/>
        <end position="299"/>
    </location>
</feature>
<feature type="binding site" evidence="1">
    <location>
        <begin position="72"/>
        <end position="73"/>
    </location>
    <ligand>
        <name>substrate</name>
    </ligand>
</feature>
<feature type="binding site" evidence="1">
    <location>
        <position position="94"/>
    </location>
    <ligand>
        <name>substrate</name>
    </ligand>
</feature>
<feature type="binding site" evidence="1">
    <location>
        <position position="196"/>
    </location>
    <ligand>
        <name>substrate</name>
    </ligand>
</feature>
<feature type="site" description="Transition state stabilizer" evidence="1">
    <location>
        <position position="37"/>
    </location>
</feature>
<feature type="site" description="Transition state stabilizer" evidence="1">
    <location>
        <position position="256"/>
    </location>
</feature>
<keyword id="KW-0028">Amino-acid biosynthesis</keyword>
<keyword id="KW-0055">Arginine biosynthesis</keyword>
<keyword id="KW-0067">ATP-binding</keyword>
<keyword id="KW-0963">Cytoplasm</keyword>
<keyword id="KW-0418">Kinase</keyword>
<keyword id="KW-0547">Nucleotide-binding</keyword>
<keyword id="KW-0808">Transferase</keyword>
<reference key="1">
    <citation type="journal article" date="2005" name="BMC Genomics">
        <title>Bacterial genome adaptation to niches: divergence of the potential virulence genes in three Burkholderia species of different survival strategies.</title>
        <authorList>
            <person name="Kim H.S."/>
            <person name="Schell M.A."/>
            <person name="Yu Y."/>
            <person name="Ulrich R.L."/>
            <person name="Sarria S.H."/>
            <person name="Nierman W.C."/>
            <person name="DeShazer D."/>
        </authorList>
    </citation>
    <scope>NUCLEOTIDE SEQUENCE [LARGE SCALE GENOMIC DNA]</scope>
    <source>
        <strain>ATCC 700388 / DSM 13276 / CCUG 48851 / CIP 106301 / E264</strain>
    </source>
</reference>